<proteinExistence type="inferred from homology"/>
<protein>
    <recommendedName>
        <fullName evidence="1">UPF0227 protein VS_2073</fullName>
    </recommendedName>
</protein>
<accession>B7VH49</accession>
<comment type="similarity">
    <text evidence="1">Belongs to the UPF0227 family.</text>
</comment>
<feature type="chain" id="PRO_1000149611" description="UPF0227 protein VS_2073">
    <location>
        <begin position="1"/>
        <end position="179"/>
    </location>
</feature>
<evidence type="ECO:0000255" key="1">
    <source>
        <dbReference type="HAMAP-Rule" id="MF_01047"/>
    </source>
</evidence>
<gene>
    <name type="ordered locus">VS_2073</name>
</gene>
<sequence>MIIYLHGFDSTSPGNHEKILQLQFIDDDVRFINYSTLHPKHDMQHLLKEVHKVIEQSDDPHPIICGVGLGGFWSERIGFLCGIKQVVFNPNLHPENNMVGRIDRPEEYEDIATKCVAQYRMKNKGRCLVVLSREDEIHDNTKTASALEDYYEVVWDEKESHKFKKISQHLQAMKAFKNA</sequence>
<reference key="1">
    <citation type="submission" date="2009-02" db="EMBL/GenBank/DDBJ databases">
        <title>Vibrio splendidus str. LGP32 complete genome.</title>
        <authorList>
            <person name="Mazel D."/>
            <person name="Le Roux F."/>
        </authorList>
    </citation>
    <scope>NUCLEOTIDE SEQUENCE [LARGE SCALE GENOMIC DNA]</scope>
    <source>
        <strain>LGP32</strain>
    </source>
</reference>
<organism>
    <name type="scientific">Vibrio atlanticus (strain LGP32)</name>
    <name type="common">Vibrio splendidus (strain Mel32)</name>
    <dbReference type="NCBI Taxonomy" id="575788"/>
    <lineage>
        <taxon>Bacteria</taxon>
        <taxon>Pseudomonadati</taxon>
        <taxon>Pseudomonadota</taxon>
        <taxon>Gammaproteobacteria</taxon>
        <taxon>Vibrionales</taxon>
        <taxon>Vibrionaceae</taxon>
        <taxon>Vibrio</taxon>
    </lineage>
</organism>
<dbReference type="EMBL" id="FM954972">
    <property type="protein sequence ID" value="CAV19249.1"/>
    <property type="molecule type" value="Genomic_DNA"/>
</dbReference>
<dbReference type="SMR" id="B7VH49"/>
<dbReference type="STRING" id="575788.VS_2073"/>
<dbReference type="ESTHER" id="vibsl-y2073">
    <property type="family name" value="abh_upf00227"/>
</dbReference>
<dbReference type="KEGG" id="vsp:VS_2073"/>
<dbReference type="eggNOG" id="COG3150">
    <property type="taxonomic scope" value="Bacteria"/>
</dbReference>
<dbReference type="HOGENOM" id="CLU_128769_0_0_6"/>
<dbReference type="Proteomes" id="UP000009100">
    <property type="component" value="Chromosome 1"/>
</dbReference>
<dbReference type="Gene3D" id="3.40.50.1820">
    <property type="entry name" value="alpha/beta hydrolase"/>
    <property type="match status" value="1"/>
</dbReference>
<dbReference type="HAMAP" id="MF_01047">
    <property type="entry name" value="UPF0227"/>
    <property type="match status" value="1"/>
</dbReference>
<dbReference type="InterPro" id="IPR029058">
    <property type="entry name" value="AB_hydrolase_fold"/>
</dbReference>
<dbReference type="InterPro" id="IPR022987">
    <property type="entry name" value="UPF0227"/>
</dbReference>
<dbReference type="InterPro" id="IPR008886">
    <property type="entry name" value="UPF0227/Esterase_YqiA"/>
</dbReference>
<dbReference type="NCBIfam" id="NF003431">
    <property type="entry name" value="PRK04940.1"/>
    <property type="match status" value="1"/>
</dbReference>
<dbReference type="PANTHER" id="PTHR35602">
    <property type="entry name" value="ESTERASE YQIA-RELATED"/>
    <property type="match status" value="1"/>
</dbReference>
<dbReference type="PANTHER" id="PTHR35602:SF2">
    <property type="entry name" value="UPF0227 PROTEIN YCFP"/>
    <property type="match status" value="1"/>
</dbReference>
<dbReference type="Pfam" id="PF05728">
    <property type="entry name" value="UPF0227"/>
    <property type="match status" value="1"/>
</dbReference>
<dbReference type="SUPFAM" id="SSF53474">
    <property type="entry name" value="alpha/beta-Hydrolases"/>
    <property type="match status" value="1"/>
</dbReference>
<name>Y2073_VIBA3</name>